<name>RS6_BURO1</name>
<organism>
    <name type="scientific">Burkholderia orbicola (strain AU 1054)</name>
    <dbReference type="NCBI Taxonomy" id="331271"/>
    <lineage>
        <taxon>Bacteria</taxon>
        <taxon>Pseudomonadati</taxon>
        <taxon>Pseudomonadota</taxon>
        <taxon>Betaproteobacteria</taxon>
        <taxon>Burkholderiales</taxon>
        <taxon>Burkholderiaceae</taxon>
        <taxon>Burkholderia</taxon>
        <taxon>Burkholderia cepacia complex</taxon>
        <taxon>Burkholderia orbicola</taxon>
    </lineage>
</organism>
<keyword id="KW-0687">Ribonucleoprotein</keyword>
<keyword id="KW-0689">Ribosomal protein</keyword>
<keyword id="KW-0694">RNA-binding</keyword>
<keyword id="KW-0699">rRNA-binding</keyword>
<sequence length="124" mass="14304">MRHYEIVFIVHPDQSEQVPAMIERYKTTITTHGGQIHRVEDWGRRQLAYMIEKLAKAHYVCMNIECDQTTLDELEHAFKFNDAVLRHLIVKMKKAETGPSPMMKEVQREEAKKAAAAQPAEAQA</sequence>
<dbReference type="EMBL" id="CP000380">
    <property type="protein sequence ID" value="ABF81069.1"/>
    <property type="molecule type" value="Genomic_DNA"/>
</dbReference>
<dbReference type="SMR" id="Q1BH36"/>
<dbReference type="HOGENOM" id="CLU_113441_6_1_4"/>
<dbReference type="GO" id="GO:0022627">
    <property type="term" value="C:cytosolic small ribosomal subunit"/>
    <property type="evidence" value="ECO:0007669"/>
    <property type="project" value="TreeGrafter"/>
</dbReference>
<dbReference type="GO" id="GO:0070181">
    <property type="term" value="F:small ribosomal subunit rRNA binding"/>
    <property type="evidence" value="ECO:0007669"/>
    <property type="project" value="TreeGrafter"/>
</dbReference>
<dbReference type="GO" id="GO:0003735">
    <property type="term" value="F:structural constituent of ribosome"/>
    <property type="evidence" value="ECO:0007669"/>
    <property type="project" value="InterPro"/>
</dbReference>
<dbReference type="GO" id="GO:0006412">
    <property type="term" value="P:translation"/>
    <property type="evidence" value="ECO:0007669"/>
    <property type="project" value="UniProtKB-UniRule"/>
</dbReference>
<dbReference type="CDD" id="cd00473">
    <property type="entry name" value="bS6"/>
    <property type="match status" value="1"/>
</dbReference>
<dbReference type="Gene3D" id="3.30.70.60">
    <property type="match status" value="1"/>
</dbReference>
<dbReference type="HAMAP" id="MF_00360">
    <property type="entry name" value="Ribosomal_bS6"/>
    <property type="match status" value="1"/>
</dbReference>
<dbReference type="InterPro" id="IPR000529">
    <property type="entry name" value="Ribosomal_bS6"/>
</dbReference>
<dbReference type="InterPro" id="IPR035980">
    <property type="entry name" value="Ribosomal_bS6_sf"/>
</dbReference>
<dbReference type="InterPro" id="IPR020814">
    <property type="entry name" value="Ribosomal_S6_plastid/chlpt"/>
</dbReference>
<dbReference type="InterPro" id="IPR014717">
    <property type="entry name" value="Transl_elong_EF1B/ribsomal_bS6"/>
</dbReference>
<dbReference type="NCBIfam" id="TIGR00166">
    <property type="entry name" value="S6"/>
    <property type="match status" value="1"/>
</dbReference>
<dbReference type="PANTHER" id="PTHR21011">
    <property type="entry name" value="MITOCHONDRIAL 28S RIBOSOMAL PROTEIN S6"/>
    <property type="match status" value="1"/>
</dbReference>
<dbReference type="PANTHER" id="PTHR21011:SF1">
    <property type="entry name" value="SMALL RIBOSOMAL SUBUNIT PROTEIN BS6M"/>
    <property type="match status" value="1"/>
</dbReference>
<dbReference type="Pfam" id="PF01250">
    <property type="entry name" value="Ribosomal_S6"/>
    <property type="match status" value="1"/>
</dbReference>
<dbReference type="SUPFAM" id="SSF54995">
    <property type="entry name" value="Ribosomal protein S6"/>
    <property type="match status" value="1"/>
</dbReference>
<reference key="1">
    <citation type="submission" date="2006-05" db="EMBL/GenBank/DDBJ databases">
        <title>Complete sequence of chromosome 3 of Burkholderia cenocepacia AU 1054.</title>
        <authorList>
            <consortium name="US DOE Joint Genome Institute"/>
            <person name="Copeland A."/>
            <person name="Lucas S."/>
            <person name="Lapidus A."/>
            <person name="Barry K."/>
            <person name="Detter J.C."/>
            <person name="Glavina del Rio T."/>
            <person name="Hammon N."/>
            <person name="Israni S."/>
            <person name="Dalin E."/>
            <person name="Tice H."/>
            <person name="Pitluck S."/>
            <person name="Chain P."/>
            <person name="Malfatti S."/>
            <person name="Shin M."/>
            <person name="Vergez L."/>
            <person name="Schmutz J."/>
            <person name="Larimer F."/>
            <person name="Land M."/>
            <person name="Hauser L."/>
            <person name="Kyrpides N."/>
            <person name="Lykidis A."/>
            <person name="LiPuma J.J."/>
            <person name="Konstantinidis K."/>
            <person name="Tiedje J.M."/>
            <person name="Richardson P."/>
        </authorList>
    </citation>
    <scope>NUCLEOTIDE SEQUENCE [LARGE SCALE GENOMIC DNA]</scope>
    <source>
        <strain>AU 1054</strain>
    </source>
</reference>
<accession>Q1BH36</accession>
<protein>
    <recommendedName>
        <fullName evidence="1">Small ribosomal subunit protein bS6</fullName>
    </recommendedName>
    <alternativeName>
        <fullName evidence="3">30S ribosomal protein S6</fullName>
    </alternativeName>
</protein>
<feature type="chain" id="PRO_1000005226" description="Small ribosomal subunit protein bS6">
    <location>
        <begin position="1"/>
        <end position="124"/>
    </location>
</feature>
<feature type="region of interest" description="Disordered" evidence="2">
    <location>
        <begin position="96"/>
        <end position="124"/>
    </location>
</feature>
<feature type="compositionally biased region" description="Low complexity" evidence="2">
    <location>
        <begin position="114"/>
        <end position="124"/>
    </location>
</feature>
<gene>
    <name evidence="1" type="primary">rpsF</name>
    <name type="ordered locus">Bcen_6205</name>
</gene>
<comment type="function">
    <text evidence="1">Binds together with bS18 to 16S ribosomal RNA.</text>
</comment>
<comment type="similarity">
    <text evidence="1">Belongs to the bacterial ribosomal protein bS6 family.</text>
</comment>
<proteinExistence type="inferred from homology"/>
<evidence type="ECO:0000255" key="1">
    <source>
        <dbReference type="HAMAP-Rule" id="MF_00360"/>
    </source>
</evidence>
<evidence type="ECO:0000256" key="2">
    <source>
        <dbReference type="SAM" id="MobiDB-lite"/>
    </source>
</evidence>
<evidence type="ECO:0000305" key="3"/>